<organism>
    <name type="scientific">Escherichia coli O157:H7</name>
    <dbReference type="NCBI Taxonomy" id="83334"/>
    <lineage>
        <taxon>Bacteria</taxon>
        <taxon>Pseudomonadati</taxon>
        <taxon>Pseudomonadota</taxon>
        <taxon>Gammaproteobacteria</taxon>
        <taxon>Enterobacterales</taxon>
        <taxon>Enterobacteriaceae</taxon>
        <taxon>Escherichia</taxon>
    </lineage>
</organism>
<comment type="function">
    <text evidence="1">Specifically methylates the ribose of guanosine 2251 in 23S rRNA.</text>
</comment>
<comment type="catalytic activity">
    <reaction evidence="1">
        <text>guanosine(2251) in 23S rRNA + S-adenosyl-L-methionine = 2'-O-methylguanosine(2251) in 23S rRNA + S-adenosyl-L-homocysteine + H(+)</text>
        <dbReference type="Rhea" id="RHEA:24140"/>
        <dbReference type="Rhea" id="RHEA-COMP:10239"/>
        <dbReference type="Rhea" id="RHEA-COMP:10241"/>
        <dbReference type="ChEBI" id="CHEBI:15378"/>
        <dbReference type="ChEBI" id="CHEBI:57856"/>
        <dbReference type="ChEBI" id="CHEBI:59789"/>
        <dbReference type="ChEBI" id="CHEBI:74269"/>
        <dbReference type="ChEBI" id="CHEBI:74445"/>
        <dbReference type="EC" id="2.1.1.185"/>
    </reaction>
</comment>
<comment type="subunit">
    <text evidence="1">Homodimer.</text>
</comment>
<comment type="subcellular location">
    <subcellularLocation>
        <location evidence="1">Cytoplasm</location>
    </subcellularLocation>
</comment>
<comment type="similarity">
    <text evidence="1">Belongs to the class IV-like SAM-binding methyltransferase superfamily. RNA methyltransferase TrmH family. RlmB subfamily.</text>
</comment>
<protein>
    <recommendedName>
        <fullName evidence="1">23S rRNA (guanosine-2'-O-)-methyltransferase RlmB</fullName>
        <ecNumber evidence="1">2.1.1.185</ecNumber>
    </recommendedName>
    <alternativeName>
        <fullName evidence="1">23S rRNA (guanosine2251 2'-O)-methyltransferase</fullName>
    </alternativeName>
    <alternativeName>
        <fullName evidence="1">23S rRNA Gm2251 2'-O-methyltransferase</fullName>
    </alternativeName>
</protein>
<sequence>MSEMIYGIHAVQALLERAPERFQEVFILKGREDKRLLPLIHALESQGVVIQLANRQYLDEKSDGAVHQGIIARVKPGRQYQENDLPDLIASLDQPFLLILDGVTDPHNLGACLRSADAAGVHAVIVPKDRSAQLNATAKKVACGAAESVPLIRVTNLARTMRMLQEENIWIVGTAGEADHTLYQSKMTGRLALVMGAEGEGMRRLTREHCDELISIPMAGSVSSLNVSVATGICLFEAVRQRS</sequence>
<name>RLMB_ECO57</name>
<gene>
    <name evidence="1" type="primary">rlmB</name>
    <name type="ordered locus">Z5787</name>
    <name type="ordered locus">ECs5156</name>
</gene>
<proteinExistence type="inferred from homology"/>
<evidence type="ECO:0000255" key="1">
    <source>
        <dbReference type="HAMAP-Rule" id="MF_01887"/>
    </source>
</evidence>
<dbReference type="EC" id="2.1.1.185" evidence="1"/>
<dbReference type="EMBL" id="AE005174">
    <property type="protein sequence ID" value="AAG59376.1"/>
    <property type="molecule type" value="Genomic_DNA"/>
</dbReference>
<dbReference type="EMBL" id="BA000007">
    <property type="protein sequence ID" value="BAB38579.1"/>
    <property type="molecule type" value="Genomic_DNA"/>
</dbReference>
<dbReference type="PIR" id="D86114">
    <property type="entry name" value="D86114"/>
</dbReference>
<dbReference type="PIR" id="D91273">
    <property type="entry name" value="D91273"/>
</dbReference>
<dbReference type="RefSeq" id="NP_313183.1">
    <property type="nucleotide sequence ID" value="NC_002695.1"/>
</dbReference>
<dbReference type="RefSeq" id="WP_001293282.1">
    <property type="nucleotide sequence ID" value="NZ_VOAI01000008.1"/>
</dbReference>
<dbReference type="SMR" id="P63179"/>
<dbReference type="STRING" id="155864.Z5787"/>
<dbReference type="GeneID" id="913444"/>
<dbReference type="GeneID" id="93777641"/>
<dbReference type="KEGG" id="ece:Z5787"/>
<dbReference type="KEGG" id="ecs:ECs_5156"/>
<dbReference type="PATRIC" id="fig|386585.9.peg.5390"/>
<dbReference type="eggNOG" id="COG0566">
    <property type="taxonomic scope" value="Bacteria"/>
</dbReference>
<dbReference type="HOGENOM" id="CLU_021322_0_1_6"/>
<dbReference type="OMA" id="QVPPYEY"/>
<dbReference type="Proteomes" id="UP000000558">
    <property type="component" value="Chromosome"/>
</dbReference>
<dbReference type="Proteomes" id="UP000002519">
    <property type="component" value="Chromosome"/>
</dbReference>
<dbReference type="GO" id="GO:0005829">
    <property type="term" value="C:cytosol"/>
    <property type="evidence" value="ECO:0007669"/>
    <property type="project" value="TreeGrafter"/>
</dbReference>
<dbReference type="GO" id="GO:0003723">
    <property type="term" value="F:RNA binding"/>
    <property type="evidence" value="ECO:0007669"/>
    <property type="project" value="InterPro"/>
</dbReference>
<dbReference type="GO" id="GO:0070039">
    <property type="term" value="F:rRNA (guanosine-2'-O-)-methyltransferase activity"/>
    <property type="evidence" value="ECO:0007669"/>
    <property type="project" value="UniProtKB-UniRule"/>
</dbReference>
<dbReference type="CDD" id="cd18103">
    <property type="entry name" value="SpoU-like_RlmB"/>
    <property type="match status" value="1"/>
</dbReference>
<dbReference type="FunFam" id="3.40.1280.10:FF:000005">
    <property type="entry name" value="23S rRNA (guanosine-2'-O-)-methyltransferase RlmB"/>
    <property type="match status" value="1"/>
</dbReference>
<dbReference type="FunFam" id="3.30.1330.30:FF:000007">
    <property type="entry name" value="23S rRNA methyltransferase"/>
    <property type="match status" value="1"/>
</dbReference>
<dbReference type="Gene3D" id="3.30.1330.30">
    <property type="match status" value="1"/>
</dbReference>
<dbReference type="Gene3D" id="3.40.1280.10">
    <property type="match status" value="1"/>
</dbReference>
<dbReference type="HAMAP" id="MF_01887">
    <property type="entry name" value="23SrRNA_methyltr_B"/>
    <property type="match status" value="1"/>
</dbReference>
<dbReference type="InterPro" id="IPR024915">
    <property type="entry name" value="23S_rRNA_MeTrfase_RlmB"/>
</dbReference>
<dbReference type="InterPro" id="IPR029028">
    <property type="entry name" value="Alpha/beta_knot_MTases"/>
</dbReference>
<dbReference type="InterPro" id="IPR029064">
    <property type="entry name" value="Ribosomal_eL30-like_sf"/>
</dbReference>
<dbReference type="InterPro" id="IPR004441">
    <property type="entry name" value="rRNA_MeTrfase_TrmH"/>
</dbReference>
<dbReference type="InterPro" id="IPR001537">
    <property type="entry name" value="SpoU_MeTrfase"/>
</dbReference>
<dbReference type="InterPro" id="IPR013123">
    <property type="entry name" value="SpoU_subst-bd"/>
</dbReference>
<dbReference type="InterPro" id="IPR029026">
    <property type="entry name" value="tRNA_m1G_MTases_N"/>
</dbReference>
<dbReference type="NCBIfam" id="NF008386">
    <property type="entry name" value="PRK11181.1"/>
    <property type="match status" value="1"/>
</dbReference>
<dbReference type="NCBIfam" id="TIGR00186">
    <property type="entry name" value="rRNA_methyl_3"/>
    <property type="match status" value="1"/>
</dbReference>
<dbReference type="PANTHER" id="PTHR46429">
    <property type="entry name" value="23S RRNA (GUANOSINE-2'-O-)-METHYLTRANSFERASE RLMB"/>
    <property type="match status" value="1"/>
</dbReference>
<dbReference type="PANTHER" id="PTHR46429:SF1">
    <property type="entry name" value="23S RRNA (GUANOSINE-2'-O-)-METHYLTRANSFERASE RLMB"/>
    <property type="match status" value="1"/>
</dbReference>
<dbReference type="Pfam" id="PF00588">
    <property type="entry name" value="SpoU_methylase"/>
    <property type="match status" value="1"/>
</dbReference>
<dbReference type="Pfam" id="PF08032">
    <property type="entry name" value="SpoU_sub_bind"/>
    <property type="match status" value="1"/>
</dbReference>
<dbReference type="SMART" id="SM00967">
    <property type="entry name" value="SpoU_sub_bind"/>
    <property type="match status" value="1"/>
</dbReference>
<dbReference type="SUPFAM" id="SSF75217">
    <property type="entry name" value="alpha/beta knot"/>
    <property type="match status" value="1"/>
</dbReference>
<dbReference type="SUPFAM" id="SSF55315">
    <property type="entry name" value="L30e-like"/>
    <property type="match status" value="1"/>
</dbReference>
<keyword id="KW-0963">Cytoplasm</keyword>
<keyword id="KW-0489">Methyltransferase</keyword>
<keyword id="KW-1185">Reference proteome</keyword>
<keyword id="KW-0698">rRNA processing</keyword>
<keyword id="KW-0949">S-adenosyl-L-methionine</keyword>
<keyword id="KW-0808">Transferase</keyword>
<accession>P63179</accession>
<accession>P39290</accession>
<feature type="chain" id="PRO_0000159787" description="23S rRNA (guanosine-2'-O-)-methyltransferase RlmB">
    <location>
        <begin position="1"/>
        <end position="243"/>
    </location>
</feature>
<feature type="binding site" evidence="1">
    <location>
        <position position="196"/>
    </location>
    <ligand>
        <name>S-adenosyl-L-methionine</name>
        <dbReference type="ChEBI" id="CHEBI:59789"/>
    </ligand>
</feature>
<feature type="binding site" evidence="1">
    <location>
        <position position="216"/>
    </location>
    <ligand>
        <name>S-adenosyl-L-methionine</name>
        <dbReference type="ChEBI" id="CHEBI:59789"/>
    </ligand>
</feature>
<feature type="binding site" evidence="1">
    <location>
        <position position="225"/>
    </location>
    <ligand>
        <name>S-adenosyl-L-methionine</name>
        <dbReference type="ChEBI" id="CHEBI:59789"/>
    </ligand>
</feature>
<reference key="1">
    <citation type="journal article" date="2001" name="Nature">
        <title>Genome sequence of enterohaemorrhagic Escherichia coli O157:H7.</title>
        <authorList>
            <person name="Perna N.T."/>
            <person name="Plunkett G. III"/>
            <person name="Burland V."/>
            <person name="Mau B."/>
            <person name="Glasner J.D."/>
            <person name="Rose D.J."/>
            <person name="Mayhew G.F."/>
            <person name="Evans P.S."/>
            <person name="Gregor J."/>
            <person name="Kirkpatrick H.A."/>
            <person name="Posfai G."/>
            <person name="Hackett J."/>
            <person name="Klink S."/>
            <person name="Boutin A."/>
            <person name="Shao Y."/>
            <person name="Miller L."/>
            <person name="Grotbeck E.J."/>
            <person name="Davis N.W."/>
            <person name="Lim A."/>
            <person name="Dimalanta E.T."/>
            <person name="Potamousis K."/>
            <person name="Apodaca J."/>
            <person name="Anantharaman T.S."/>
            <person name="Lin J."/>
            <person name="Yen G."/>
            <person name="Schwartz D.C."/>
            <person name="Welch R.A."/>
            <person name="Blattner F.R."/>
        </authorList>
    </citation>
    <scope>NUCLEOTIDE SEQUENCE [LARGE SCALE GENOMIC DNA]</scope>
    <source>
        <strain>O157:H7 / EDL933 / ATCC 700927 / EHEC</strain>
    </source>
</reference>
<reference key="2">
    <citation type="journal article" date="2001" name="DNA Res.">
        <title>Complete genome sequence of enterohemorrhagic Escherichia coli O157:H7 and genomic comparison with a laboratory strain K-12.</title>
        <authorList>
            <person name="Hayashi T."/>
            <person name="Makino K."/>
            <person name="Ohnishi M."/>
            <person name="Kurokawa K."/>
            <person name="Ishii K."/>
            <person name="Yokoyama K."/>
            <person name="Han C.-G."/>
            <person name="Ohtsubo E."/>
            <person name="Nakayama K."/>
            <person name="Murata T."/>
            <person name="Tanaka M."/>
            <person name="Tobe T."/>
            <person name="Iida T."/>
            <person name="Takami H."/>
            <person name="Honda T."/>
            <person name="Sasakawa C."/>
            <person name="Ogasawara N."/>
            <person name="Yasunaga T."/>
            <person name="Kuhara S."/>
            <person name="Shiba T."/>
            <person name="Hattori M."/>
            <person name="Shinagawa H."/>
        </authorList>
    </citation>
    <scope>NUCLEOTIDE SEQUENCE [LARGE SCALE GENOMIC DNA]</scope>
    <source>
        <strain>O157:H7 / Sakai / RIMD 0509952 / EHEC</strain>
    </source>
</reference>